<accession>C4KJC1</accession>
<protein>
    <recommendedName>
        <fullName evidence="1">Putative pterin-4-alpha-carbinolamine dehydratase</fullName>
        <shortName evidence="1">PHS</shortName>
        <ecNumber evidence="1">4.2.1.96</ecNumber>
    </recommendedName>
    <alternativeName>
        <fullName evidence="1">4-alpha-hydroxy-tetrahydropterin dehydratase</fullName>
    </alternativeName>
    <alternativeName>
        <fullName evidence="1">Pterin carbinolamine dehydratase</fullName>
        <shortName evidence="1">PCD</shortName>
    </alternativeName>
</protein>
<comment type="catalytic activity">
    <reaction evidence="1">
        <text>(4aS,6R)-4a-hydroxy-L-erythro-5,6,7,8-tetrahydrobiopterin = (6R)-L-erythro-6,7-dihydrobiopterin + H2O</text>
        <dbReference type="Rhea" id="RHEA:11920"/>
        <dbReference type="ChEBI" id="CHEBI:15377"/>
        <dbReference type="ChEBI" id="CHEBI:15642"/>
        <dbReference type="ChEBI" id="CHEBI:43120"/>
        <dbReference type="EC" id="4.2.1.96"/>
    </reaction>
</comment>
<comment type="similarity">
    <text evidence="1">Belongs to the pterin-4-alpha-carbinolamine dehydratase family.</text>
</comment>
<keyword id="KW-0456">Lyase</keyword>
<evidence type="ECO:0000255" key="1">
    <source>
        <dbReference type="HAMAP-Rule" id="MF_00434"/>
    </source>
</evidence>
<feature type="chain" id="PRO_1000206072" description="Putative pterin-4-alpha-carbinolamine dehydratase">
    <location>
        <begin position="1"/>
        <end position="99"/>
    </location>
</feature>
<gene>
    <name type="ordered locus">M164_0005</name>
</gene>
<proteinExistence type="inferred from homology"/>
<reference key="1">
    <citation type="journal article" date="2009" name="Proc. Natl. Acad. Sci. U.S.A.">
        <title>Biogeography of the Sulfolobus islandicus pan-genome.</title>
        <authorList>
            <person name="Reno M.L."/>
            <person name="Held N.L."/>
            <person name="Fields C.J."/>
            <person name="Burke P.V."/>
            <person name="Whitaker R.J."/>
        </authorList>
    </citation>
    <scope>NUCLEOTIDE SEQUENCE [LARGE SCALE GENOMIC DNA]</scope>
    <source>
        <strain>M.16.4 / Kamchatka #3</strain>
    </source>
</reference>
<name>PHS_SACI6</name>
<dbReference type="EC" id="4.2.1.96" evidence="1"/>
<dbReference type="EMBL" id="CP001402">
    <property type="protein sequence ID" value="ACR40641.1"/>
    <property type="molecule type" value="Genomic_DNA"/>
</dbReference>
<dbReference type="RefSeq" id="WP_012710184.1">
    <property type="nucleotide sequence ID" value="NC_012726.1"/>
</dbReference>
<dbReference type="SMR" id="C4KJC1"/>
<dbReference type="KEGG" id="sid:M164_0005"/>
<dbReference type="HOGENOM" id="CLU_081974_4_5_2"/>
<dbReference type="Proteomes" id="UP000001479">
    <property type="component" value="Chromosome"/>
</dbReference>
<dbReference type="GO" id="GO:0008124">
    <property type="term" value="F:4-alpha-hydroxytetrahydrobiopterin dehydratase activity"/>
    <property type="evidence" value="ECO:0007669"/>
    <property type="project" value="UniProtKB-UniRule"/>
</dbReference>
<dbReference type="GO" id="GO:0006729">
    <property type="term" value="P:tetrahydrobiopterin biosynthetic process"/>
    <property type="evidence" value="ECO:0007669"/>
    <property type="project" value="InterPro"/>
</dbReference>
<dbReference type="CDD" id="cd00488">
    <property type="entry name" value="PCD_DCoH"/>
    <property type="match status" value="1"/>
</dbReference>
<dbReference type="Gene3D" id="3.30.1360.20">
    <property type="entry name" value="Transcriptional coactivator/pterin dehydratase"/>
    <property type="match status" value="1"/>
</dbReference>
<dbReference type="HAMAP" id="MF_00434">
    <property type="entry name" value="Pterin_4_alpha"/>
    <property type="match status" value="1"/>
</dbReference>
<dbReference type="InterPro" id="IPR036428">
    <property type="entry name" value="PCD_sf"/>
</dbReference>
<dbReference type="InterPro" id="IPR001533">
    <property type="entry name" value="Pterin_deHydtase"/>
</dbReference>
<dbReference type="NCBIfam" id="NF002017">
    <property type="entry name" value="PRK00823.1-2"/>
    <property type="match status" value="1"/>
</dbReference>
<dbReference type="PANTHER" id="PTHR12599">
    <property type="entry name" value="PTERIN-4-ALPHA-CARBINOLAMINE DEHYDRATASE"/>
    <property type="match status" value="1"/>
</dbReference>
<dbReference type="PANTHER" id="PTHR12599:SF0">
    <property type="entry name" value="PTERIN-4-ALPHA-CARBINOLAMINE DEHYDRATASE"/>
    <property type="match status" value="1"/>
</dbReference>
<dbReference type="Pfam" id="PF01329">
    <property type="entry name" value="Pterin_4a"/>
    <property type="match status" value="1"/>
</dbReference>
<dbReference type="SUPFAM" id="SSF55248">
    <property type="entry name" value="PCD-like"/>
    <property type="match status" value="1"/>
</dbReference>
<organism>
    <name type="scientific">Saccharolobus islandicus (strain M.16.4 / Kamchatka #3)</name>
    <name type="common">Sulfolobus islandicus</name>
    <dbReference type="NCBI Taxonomy" id="426118"/>
    <lineage>
        <taxon>Archaea</taxon>
        <taxon>Thermoproteota</taxon>
        <taxon>Thermoprotei</taxon>
        <taxon>Sulfolobales</taxon>
        <taxon>Sulfolobaceae</taxon>
        <taxon>Saccharolobus</taxon>
    </lineage>
</organism>
<sequence length="99" mass="11408">MSGISSKGLEELKNNGWLILEDGKKIKKEFKFKDFKQSIDFLKDIQPSADALDHHPDVCIYYNRVIVELTTHDMGGLTDLDYKLAIKIDELYKMKTSNL</sequence>